<comment type="catalytic activity">
    <reaction evidence="1">
        <text>2-(N(omega)-L-arginino)succinate = fumarate + L-arginine</text>
        <dbReference type="Rhea" id="RHEA:24020"/>
        <dbReference type="ChEBI" id="CHEBI:29806"/>
        <dbReference type="ChEBI" id="CHEBI:32682"/>
        <dbReference type="ChEBI" id="CHEBI:57472"/>
        <dbReference type="EC" id="4.3.2.1"/>
    </reaction>
</comment>
<comment type="pathway">
    <text evidence="1">Amino-acid biosynthesis; L-arginine biosynthesis; L-arginine from L-ornithine and carbamoyl phosphate: step 3/3.</text>
</comment>
<comment type="subcellular location">
    <subcellularLocation>
        <location evidence="1">Cytoplasm</location>
    </subcellularLocation>
</comment>
<comment type="similarity">
    <text evidence="1">Belongs to the lyase 1 family. Argininosuccinate lyase subfamily.</text>
</comment>
<name>ARLY_ECTM1</name>
<organism>
    <name type="scientific">Ectopseudomonas mendocina (strain ymp)</name>
    <name type="common">Pseudomonas mendocina</name>
    <dbReference type="NCBI Taxonomy" id="399739"/>
    <lineage>
        <taxon>Bacteria</taxon>
        <taxon>Pseudomonadati</taxon>
        <taxon>Pseudomonadota</taxon>
        <taxon>Gammaproteobacteria</taxon>
        <taxon>Pseudomonadales</taxon>
        <taxon>Pseudomonadaceae</taxon>
        <taxon>Ectopseudomonas</taxon>
    </lineage>
</organism>
<gene>
    <name evidence="1" type="primary">argH</name>
    <name type="ordered locus">Pmen_0277</name>
</gene>
<reference key="1">
    <citation type="submission" date="2007-04" db="EMBL/GenBank/DDBJ databases">
        <title>Complete sequence of Pseudomonas mendocina ymp.</title>
        <authorList>
            <consortium name="US DOE Joint Genome Institute"/>
            <person name="Copeland A."/>
            <person name="Lucas S."/>
            <person name="Lapidus A."/>
            <person name="Barry K."/>
            <person name="Glavina del Rio T."/>
            <person name="Dalin E."/>
            <person name="Tice H."/>
            <person name="Pitluck S."/>
            <person name="Kiss H."/>
            <person name="Brettin T."/>
            <person name="Detter J.C."/>
            <person name="Bruce D."/>
            <person name="Han C."/>
            <person name="Schmutz J."/>
            <person name="Larimer F."/>
            <person name="Land M."/>
            <person name="Hauser L."/>
            <person name="Kyrpides N."/>
            <person name="Mikhailova N."/>
            <person name="Hersman L."/>
            <person name="Dubois J."/>
            <person name="Maurice P."/>
            <person name="Richardson P."/>
        </authorList>
    </citation>
    <scope>NUCLEOTIDE SEQUENCE [LARGE SCALE GENOMIC DNA]</scope>
    <source>
        <strain>ymp</strain>
    </source>
</reference>
<protein>
    <recommendedName>
        <fullName evidence="1">Argininosuccinate lyase</fullName>
        <shortName evidence="1">ASAL</shortName>
        <ecNumber evidence="1">4.3.2.1</ecNumber>
    </recommendedName>
    <alternativeName>
        <fullName evidence="1">Arginosuccinase</fullName>
    </alternativeName>
</protein>
<accession>A4XNY5</accession>
<keyword id="KW-0028">Amino-acid biosynthesis</keyword>
<keyword id="KW-0055">Arginine biosynthesis</keyword>
<keyword id="KW-0963">Cytoplasm</keyword>
<keyword id="KW-0456">Lyase</keyword>
<sequence>MSSEKTNQSWGGRFSEPVDAFVARFTASVEFDKRLYRHDIMGSIAHASMLAKVGVLTDAERDAIEGGLKQIQGEIEAGQFDWRVDLEDVHMNIEARLTDRIGVTGKKLHTGRSRNDQVATDIRLWLRDEIDVILAEITRLQQGLLGLAEAEADTIMPGFTHLQTAQPVTFGHHLLAWFEMLSRDYERLVDCRKRTNRMPLGSAALAGTTYPIQREITAELLGFDAVGGNSLDGVSDRDFAIEFCAAASLAMMHLSRFSEELVLWTSAQFQFIDLPDRFCTGSSIMPQKKNPDVPELVRGKTGRVFGALTGLLTLMKGQPLAYNKDNQEDKEPLFDAADTLRDSLRAFADMVPAIKPKREIMREAALRGFSTATDLADYLVRKGLPFRDCHEIVGHAVKYGVHSGKDLAEMSLDELRQFSDQIDDDVFAVLTLEGSVGARDHIGGTAPNQVRAAVARGRELLSAR</sequence>
<evidence type="ECO:0000255" key="1">
    <source>
        <dbReference type="HAMAP-Rule" id="MF_00006"/>
    </source>
</evidence>
<proteinExistence type="inferred from homology"/>
<feature type="chain" id="PRO_1000000527" description="Argininosuccinate lyase">
    <location>
        <begin position="1"/>
        <end position="464"/>
    </location>
</feature>
<dbReference type="EC" id="4.3.2.1" evidence="1"/>
<dbReference type="EMBL" id="CP000680">
    <property type="protein sequence ID" value="ABP83051.1"/>
    <property type="molecule type" value="Genomic_DNA"/>
</dbReference>
<dbReference type="SMR" id="A4XNY5"/>
<dbReference type="STRING" id="399739.Pmen_0277"/>
<dbReference type="KEGG" id="pmy:Pmen_0277"/>
<dbReference type="PATRIC" id="fig|399739.8.peg.284"/>
<dbReference type="eggNOG" id="COG0165">
    <property type="taxonomic scope" value="Bacteria"/>
</dbReference>
<dbReference type="HOGENOM" id="CLU_027272_2_3_6"/>
<dbReference type="OrthoDB" id="9769623at2"/>
<dbReference type="UniPathway" id="UPA00068">
    <property type="reaction ID" value="UER00114"/>
</dbReference>
<dbReference type="GO" id="GO:0005829">
    <property type="term" value="C:cytosol"/>
    <property type="evidence" value="ECO:0007669"/>
    <property type="project" value="TreeGrafter"/>
</dbReference>
<dbReference type="GO" id="GO:0004056">
    <property type="term" value="F:argininosuccinate lyase activity"/>
    <property type="evidence" value="ECO:0007669"/>
    <property type="project" value="UniProtKB-UniRule"/>
</dbReference>
<dbReference type="GO" id="GO:0042450">
    <property type="term" value="P:arginine biosynthetic process via ornithine"/>
    <property type="evidence" value="ECO:0007669"/>
    <property type="project" value="InterPro"/>
</dbReference>
<dbReference type="GO" id="GO:0006526">
    <property type="term" value="P:L-arginine biosynthetic process"/>
    <property type="evidence" value="ECO:0007669"/>
    <property type="project" value="UniProtKB-UniRule"/>
</dbReference>
<dbReference type="CDD" id="cd01359">
    <property type="entry name" value="Argininosuccinate_lyase"/>
    <property type="match status" value="1"/>
</dbReference>
<dbReference type="FunFam" id="1.10.275.10:FF:000002">
    <property type="entry name" value="Argininosuccinate lyase"/>
    <property type="match status" value="1"/>
</dbReference>
<dbReference type="FunFam" id="1.10.40.30:FF:000001">
    <property type="entry name" value="Argininosuccinate lyase"/>
    <property type="match status" value="1"/>
</dbReference>
<dbReference type="FunFam" id="1.20.200.10:FF:000015">
    <property type="entry name" value="argininosuccinate lyase isoform X2"/>
    <property type="match status" value="1"/>
</dbReference>
<dbReference type="Gene3D" id="1.10.40.30">
    <property type="entry name" value="Fumarase/aspartase (C-terminal domain)"/>
    <property type="match status" value="1"/>
</dbReference>
<dbReference type="Gene3D" id="1.20.200.10">
    <property type="entry name" value="Fumarase/aspartase (Central domain)"/>
    <property type="match status" value="1"/>
</dbReference>
<dbReference type="Gene3D" id="1.10.275.10">
    <property type="entry name" value="Fumarase/aspartase (N-terminal domain)"/>
    <property type="match status" value="1"/>
</dbReference>
<dbReference type="HAMAP" id="MF_00006">
    <property type="entry name" value="Arg_succ_lyase"/>
    <property type="match status" value="1"/>
</dbReference>
<dbReference type="InterPro" id="IPR029419">
    <property type="entry name" value="Arg_succ_lyase_C"/>
</dbReference>
<dbReference type="InterPro" id="IPR009049">
    <property type="entry name" value="Argininosuccinate_lyase"/>
</dbReference>
<dbReference type="InterPro" id="IPR024083">
    <property type="entry name" value="Fumarase/histidase_N"/>
</dbReference>
<dbReference type="InterPro" id="IPR020557">
    <property type="entry name" value="Fumarate_lyase_CS"/>
</dbReference>
<dbReference type="InterPro" id="IPR000362">
    <property type="entry name" value="Fumarate_lyase_fam"/>
</dbReference>
<dbReference type="InterPro" id="IPR022761">
    <property type="entry name" value="Fumarate_lyase_N"/>
</dbReference>
<dbReference type="InterPro" id="IPR008948">
    <property type="entry name" value="L-Aspartase-like"/>
</dbReference>
<dbReference type="NCBIfam" id="TIGR00838">
    <property type="entry name" value="argH"/>
    <property type="match status" value="1"/>
</dbReference>
<dbReference type="PANTHER" id="PTHR43814">
    <property type="entry name" value="ARGININOSUCCINATE LYASE"/>
    <property type="match status" value="1"/>
</dbReference>
<dbReference type="PANTHER" id="PTHR43814:SF1">
    <property type="entry name" value="ARGININOSUCCINATE LYASE"/>
    <property type="match status" value="1"/>
</dbReference>
<dbReference type="Pfam" id="PF14698">
    <property type="entry name" value="ASL_C2"/>
    <property type="match status" value="1"/>
</dbReference>
<dbReference type="Pfam" id="PF00206">
    <property type="entry name" value="Lyase_1"/>
    <property type="match status" value="1"/>
</dbReference>
<dbReference type="PRINTS" id="PR00145">
    <property type="entry name" value="ARGSUCLYASE"/>
</dbReference>
<dbReference type="PRINTS" id="PR00149">
    <property type="entry name" value="FUMRATELYASE"/>
</dbReference>
<dbReference type="SUPFAM" id="SSF48557">
    <property type="entry name" value="L-aspartase-like"/>
    <property type="match status" value="1"/>
</dbReference>
<dbReference type="PROSITE" id="PS00163">
    <property type="entry name" value="FUMARATE_LYASES"/>
    <property type="match status" value="1"/>
</dbReference>